<keyword id="KW-0067">ATP-binding</keyword>
<keyword id="KW-0963">Cytoplasm</keyword>
<keyword id="KW-0436">Ligase</keyword>
<keyword id="KW-0547">Nucleotide-binding</keyword>
<keyword id="KW-1185">Reference proteome</keyword>
<keyword id="KW-0819">tRNA processing</keyword>
<feature type="chain" id="PRO_0000181791" description="tRNA(Ile)-lysidine synthase">
    <location>
        <begin position="1"/>
        <end position="414"/>
    </location>
</feature>
<feature type="binding site" evidence="1">
    <location>
        <begin position="13"/>
        <end position="18"/>
    </location>
    <ligand>
        <name>ATP</name>
        <dbReference type="ChEBI" id="CHEBI:30616"/>
    </ligand>
</feature>
<accession>Q9WZ48</accession>
<proteinExistence type="inferred from homology"/>
<dbReference type="EC" id="6.3.4.19" evidence="1"/>
<dbReference type="EMBL" id="AE000512">
    <property type="protein sequence ID" value="AAD35664.1"/>
    <property type="molecule type" value="Genomic_DNA"/>
</dbReference>
<dbReference type="PIR" id="D72358">
    <property type="entry name" value="D72358"/>
</dbReference>
<dbReference type="RefSeq" id="NP_228389.1">
    <property type="nucleotide sequence ID" value="NC_000853.1"/>
</dbReference>
<dbReference type="RefSeq" id="WP_010865151.1">
    <property type="nucleotide sequence ID" value="NC_000853.1"/>
</dbReference>
<dbReference type="SMR" id="Q9WZ48"/>
<dbReference type="FunCoup" id="Q9WZ48">
    <property type="interactions" value="110"/>
</dbReference>
<dbReference type="STRING" id="243274.TM_0579"/>
<dbReference type="PaxDb" id="243274-THEMA_01770"/>
<dbReference type="EnsemblBacteria" id="AAD35664">
    <property type="protein sequence ID" value="AAD35664"/>
    <property type="gene ID" value="TM_0579"/>
</dbReference>
<dbReference type="KEGG" id="tma:TM0579"/>
<dbReference type="KEGG" id="tmi:THEMA_01770"/>
<dbReference type="KEGG" id="tmm:Tmari_0577"/>
<dbReference type="KEGG" id="tmw:THMA_0594"/>
<dbReference type="eggNOG" id="COG0037">
    <property type="taxonomic scope" value="Bacteria"/>
</dbReference>
<dbReference type="InParanoid" id="Q9WZ48"/>
<dbReference type="OrthoDB" id="9807403at2"/>
<dbReference type="Proteomes" id="UP000008183">
    <property type="component" value="Chromosome"/>
</dbReference>
<dbReference type="GO" id="GO:0005737">
    <property type="term" value="C:cytoplasm"/>
    <property type="evidence" value="ECO:0007669"/>
    <property type="project" value="UniProtKB-SubCell"/>
</dbReference>
<dbReference type="GO" id="GO:0005524">
    <property type="term" value="F:ATP binding"/>
    <property type="evidence" value="ECO:0007669"/>
    <property type="project" value="UniProtKB-UniRule"/>
</dbReference>
<dbReference type="GO" id="GO:0032267">
    <property type="term" value="F:tRNA(Ile)-lysidine synthase activity"/>
    <property type="evidence" value="ECO:0007669"/>
    <property type="project" value="UniProtKB-EC"/>
</dbReference>
<dbReference type="GO" id="GO:0006400">
    <property type="term" value="P:tRNA modification"/>
    <property type="evidence" value="ECO:0007669"/>
    <property type="project" value="UniProtKB-UniRule"/>
</dbReference>
<dbReference type="CDD" id="cd01992">
    <property type="entry name" value="TilS_N"/>
    <property type="match status" value="1"/>
</dbReference>
<dbReference type="Gene3D" id="3.40.50.620">
    <property type="entry name" value="HUPs"/>
    <property type="match status" value="1"/>
</dbReference>
<dbReference type="HAMAP" id="MF_01161">
    <property type="entry name" value="tRNA_Ile_lys_synt"/>
    <property type="match status" value="1"/>
</dbReference>
<dbReference type="InterPro" id="IPR012796">
    <property type="entry name" value="Lysidine-tRNA-synth_C"/>
</dbReference>
<dbReference type="InterPro" id="IPR014729">
    <property type="entry name" value="Rossmann-like_a/b/a_fold"/>
</dbReference>
<dbReference type="InterPro" id="IPR011063">
    <property type="entry name" value="TilS/TtcA_N"/>
</dbReference>
<dbReference type="InterPro" id="IPR012094">
    <property type="entry name" value="tRNA_Ile_lys_synt"/>
</dbReference>
<dbReference type="InterPro" id="IPR012795">
    <property type="entry name" value="tRNA_Ile_lys_synt_N"/>
</dbReference>
<dbReference type="NCBIfam" id="TIGR02433">
    <property type="entry name" value="lysidine_TilS_C"/>
    <property type="match status" value="1"/>
</dbReference>
<dbReference type="NCBIfam" id="TIGR02432">
    <property type="entry name" value="lysidine_TilS_N"/>
    <property type="match status" value="1"/>
</dbReference>
<dbReference type="PANTHER" id="PTHR43033">
    <property type="entry name" value="TRNA(ILE)-LYSIDINE SYNTHASE-RELATED"/>
    <property type="match status" value="1"/>
</dbReference>
<dbReference type="PANTHER" id="PTHR43033:SF1">
    <property type="entry name" value="TRNA(ILE)-LYSIDINE SYNTHASE-RELATED"/>
    <property type="match status" value="1"/>
</dbReference>
<dbReference type="Pfam" id="PF01171">
    <property type="entry name" value="ATP_bind_3"/>
    <property type="match status" value="1"/>
</dbReference>
<dbReference type="Pfam" id="PF11734">
    <property type="entry name" value="TilS_C"/>
    <property type="match status" value="1"/>
</dbReference>
<dbReference type="SMART" id="SM00977">
    <property type="entry name" value="TilS_C"/>
    <property type="match status" value="1"/>
</dbReference>
<dbReference type="SUPFAM" id="SSF52402">
    <property type="entry name" value="Adenine nucleotide alpha hydrolases-like"/>
    <property type="match status" value="1"/>
</dbReference>
<dbReference type="SUPFAM" id="SSF56037">
    <property type="entry name" value="PheT/TilS domain"/>
    <property type="match status" value="1"/>
</dbReference>
<gene>
    <name evidence="1" type="primary">tilS</name>
    <name type="ordered locus">TM_0579</name>
</gene>
<name>TILS_THEMA</name>
<protein>
    <recommendedName>
        <fullName evidence="1">tRNA(Ile)-lysidine synthase</fullName>
        <ecNumber evidence="1">6.3.4.19</ecNumber>
    </recommendedName>
    <alternativeName>
        <fullName evidence="1">tRNA(Ile)-2-lysyl-cytidine synthase</fullName>
    </alternativeName>
    <alternativeName>
        <fullName evidence="1">tRNA(Ile)-lysidine synthetase</fullName>
    </alternativeName>
</protein>
<organism>
    <name type="scientific">Thermotoga maritima (strain ATCC 43589 / DSM 3109 / JCM 10099 / NBRC 100826 / MSB8)</name>
    <dbReference type="NCBI Taxonomy" id="243274"/>
    <lineage>
        <taxon>Bacteria</taxon>
        <taxon>Thermotogati</taxon>
        <taxon>Thermotogota</taxon>
        <taxon>Thermotogae</taxon>
        <taxon>Thermotogales</taxon>
        <taxon>Thermotogaceae</taxon>
        <taxon>Thermotoga</taxon>
    </lineage>
</organism>
<evidence type="ECO:0000255" key="1">
    <source>
        <dbReference type="HAMAP-Rule" id="MF_01161"/>
    </source>
</evidence>
<comment type="function">
    <text evidence="1">Ligates lysine onto the cytidine present at position 34 of the AUA codon-specific tRNA(Ile) that contains the anticodon CAU, in an ATP-dependent manner. Cytidine is converted to lysidine, thus changing the amino acid specificity of the tRNA from methionine to isoleucine.</text>
</comment>
<comment type="catalytic activity">
    <reaction evidence="1">
        <text>cytidine(34) in tRNA(Ile2) + L-lysine + ATP = lysidine(34) in tRNA(Ile2) + AMP + diphosphate + H(+)</text>
        <dbReference type="Rhea" id="RHEA:43744"/>
        <dbReference type="Rhea" id="RHEA-COMP:10625"/>
        <dbReference type="Rhea" id="RHEA-COMP:10670"/>
        <dbReference type="ChEBI" id="CHEBI:15378"/>
        <dbReference type="ChEBI" id="CHEBI:30616"/>
        <dbReference type="ChEBI" id="CHEBI:32551"/>
        <dbReference type="ChEBI" id="CHEBI:33019"/>
        <dbReference type="ChEBI" id="CHEBI:82748"/>
        <dbReference type="ChEBI" id="CHEBI:83665"/>
        <dbReference type="ChEBI" id="CHEBI:456215"/>
        <dbReference type="EC" id="6.3.4.19"/>
    </reaction>
</comment>
<comment type="subcellular location">
    <subcellularLocation>
        <location evidence="1">Cytoplasm</location>
    </subcellularLocation>
</comment>
<comment type="domain">
    <text>The N-terminal region contains the highly conserved SGGXDS motif, predicted to be a P-loop motif involved in ATP binding.</text>
</comment>
<comment type="similarity">
    <text evidence="1">Belongs to the tRNA(Ile)-lysidine synthase family.</text>
</comment>
<reference key="1">
    <citation type="journal article" date="1999" name="Nature">
        <title>Evidence for lateral gene transfer between Archaea and Bacteria from genome sequence of Thermotoga maritima.</title>
        <authorList>
            <person name="Nelson K.E."/>
            <person name="Clayton R.A."/>
            <person name="Gill S.R."/>
            <person name="Gwinn M.L."/>
            <person name="Dodson R.J."/>
            <person name="Haft D.H."/>
            <person name="Hickey E.K."/>
            <person name="Peterson J.D."/>
            <person name="Nelson W.C."/>
            <person name="Ketchum K.A."/>
            <person name="McDonald L.A."/>
            <person name="Utterback T.R."/>
            <person name="Malek J.A."/>
            <person name="Linher K.D."/>
            <person name="Garrett M.M."/>
            <person name="Stewart A.M."/>
            <person name="Cotton M.D."/>
            <person name="Pratt M.S."/>
            <person name="Phillips C.A."/>
            <person name="Richardson D.L."/>
            <person name="Heidelberg J.F."/>
            <person name="Sutton G.G."/>
            <person name="Fleischmann R.D."/>
            <person name="Eisen J.A."/>
            <person name="White O."/>
            <person name="Salzberg S.L."/>
            <person name="Smith H.O."/>
            <person name="Venter J.C."/>
            <person name="Fraser C.M."/>
        </authorList>
    </citation>
    <scope>NUCLEOTIDE SEQUENCE [LARGE SCALE GENOMIC DNA]</scope>
    <source>
        <strain>ATCC 43589 / DSM 3109 / JCM 10099 / NBRC 100826 / MSB8</strain>
    </source>
</reference>
<sequence length="414" mass="48834">MLEEGEHVLVAVSGGIDSMTLLYVLRKFSPLLKIKITAAHLDHRIRESSRRDREFVERICRQWNIPVETSEVDVPSLWKDSGKTLEEIAREVRYDFLKRTAKKVGASKIALAHHKNDLLETVVHRLIRGTGPLGLACISPKREEFIRPFLVFKRSEIEEYARKNNVPYVVDETNYNVKYTRNFIRHRIVPLMKELNPTVEDAVYRLVSVTHLLRNFVERTVQDFVERNVYFYKDYAVFVEPEDLFLFLEVTRWVLKEMYGRVPEYEKLIGTLKSKRVELWSGIFVERSFGYVAVGKTVFKKKYRVEVKGDMLEMEGFKIRVVNNRNDMKFWVRNRKEGDRIIVNGRERKLKDVFIEKKVPTFYRDRVPLLVDEEDRVLWVPGIARSDFLPEDVVVELLEYPVGYVKGGTYFEQV</sequence>